<feature type="signal peptide" evidence="1">
    <location>
        <begin position="1"/>
        <end position="29"/>
    </location>
</feature>
<feature type="chain" id="PRO_0000018065" description="Uncharacterized lipoprotein TP_0133">
    <location>
        <begin position="30"/>
        <end position="409"/>
    </location>
</feature>
<feature type="lipid moiety-binding region" description="N-palmitoyl cysteine" evidence="1">
    <location>
        <position position="30"/>
    </location>
</feature>
<feature type="lipid moiety-binding region" description="S-diacylglycerol cysteine" evidence="1">
    <location>
        <position position="30"/>
    </location>
</feature>
<evidence type="ECO:0000255" key="1"/>
<evidence type="ECO:0000305" key="2"/>
<protein>
    <recommendedName>
        <fullName>Uncharacterized lipoprotein TP_0133</fullName>
    </recommendedName>
</protein>
<accession>O83169</accession>
<gene>
    <name type="ordered locus">TP_0133</name>
</gene>
<name>Y133_TREPA</name>
<keyword id="KW-1003">Cell membrane</keyword>
<keyword id="KW-0449">Lipoprotein</keyword>
<keyword id="KW-0472">Membrane</keyword>
<keyword id="KW-0564">Palmitate</keyword>
<keyword id="KW-1185">Reference proteome</keyword>
<keyword id="KW-0732">Signal</keyword>
<organism>
    <name type="scientific">Treponema pallidum (strain Nichols)</name>
    <dbReference type="NCBI Taxonomy" id="243276"/>
    <lineage>
        <taxon>Bacteria</taxon>
        <taxon>Pseudomonadati</taxon>
        <taxon>Spirochaetota</taxon>
        <taxon>Spirochaetia</taxon>
        <taxon>Spirochaetales</taxon>
        <taxon>Treponemataceae</taxon>
        <taxon>Treponema</taxon>
    </lineage>
</organism>
<proteinExistence type="inferred from homology"/>
<comment type="subcellular location">
    <subcellularLocation>
        <location evidence="2">Cell membrane</location>
        <topology evidence="2">Lipid-anchor</topology>
    </subcellularLocation>
</comment>
<comment type="similarity">
    <text evidence="2">Belongs to the TP013X lipoprotein family.</text>
</comment>
<comment type="sequence caution" evidence="2">
    <conflict type="erroneous initiation">
        <sequence resource="EMBL-CDS" id="AAC65124"/>
    </conflict>
</comment>
<sequence>MARSRCVHRVVHQAACIGVIGLSTSALTTCDFTGIFVAIQSEVPIKTPSIPGAIYGLVKAGSKLYATNGQLWKKNVAEEGKDWERESCFDSVIGDSRITSLAADNGENGVLVACILGKGAYKWSQGSADQTSGNPSALSGTEKALSVVGTGTSCVYLNHTDDKVGETSSSESGGMTASGETNEFCLHAGNGFLVTTKKVCVGSDGSPVAKSDGEEPVPPILAATDDGSGHVYILTKDKVYCKKVNQSEGKIQDCPQSAAAAPEPTGAHSVAHKVADAHSIAFFKNGSDEFLLIGGRQGYGEIKLERGSGSNGNGAQCVHLKEENVHDQTGWHEKGSTPKGSAEQYRSTIGRWAVSGIYVIKKSTSGGRGKRSTSTDCERPDLYVAVGDTNDTYTGLWRFDSAAQKWNRE</sequence>
<dbReference type="EMBL" id="AE000520">
    <property type="protein sequence ID" value="AAC65124.1"/>
    <property type="status" value="ALT_INIT"/>
    <property type="molecule type" value="Genomic_DNA"/>
</dbReference>
<dbReference type="PIR" id="B71363">
    <property type="entry name" value="B71363"/>
</dbReference>
<dbReference type="IntAct" id="O83169">
    <property type="interactions" value="3"/>
</dbReference>
<dbReference type="STRING" id="243276.TP_0133"/>
<dbReference type="EnsemblBacteria" id="AAC65124">
    <property type="protein sequence ID" value="AAC65124"/>
    <property type="gene ID" value="TP_0133"/>
</dbReference>
<dbReference type="KEGG" id="tpa:TP_0133"/>
<dbReference type="HOGENOM" id="CLU_056007_0_0_12"/>
<dbReference type="Proteomes" id="UP000000811">
    <property type="component" value="Chromosome"/>
</dbReference>
<dbReference type="GO" id="GO:0005886">
    <property type="term" value="C:plasma membrane"/>
    <property type="evidence" value="ECO:0007669"/>
    <property type="project" value="UniProtKB-SubCell"/>
</dbReference>
<reference key="1">
    <citation type="journal article" date="1998" name="Science">
        <title>Complete genome sequence of Treponema pallidum, the syphilis spirochete.</title>
        <authorList>
            <person name="Fraser C.M."/>
            <person name="Norris S.J."/>
            <person name="Weinstock G.M."/>
            <person name="White O."/>
            <person name="Sutton G.G."/>
            <person name="Dodson R.J."/>
            <person name="Gwinn M.L."/>
            <person name="Hickey E.K."/>
            <person name="Clayton R.A."/>
            <person name="Ketchum K.A."/>
            <person name="Sodergren E."/>
            <person name="Hardham J.M."/>
            <person name="McLeod M.P."/>
            <person name="Salzberg S.L."/>
            <person name="Peterson J.D."/>
            <person name="Khalak H.G."/>
            <person name="Richardson D.L."/>
            <person name="Howell J.K."/>
            <person name="Chidambaram M."/>
            <person name="Utterback T.R."/>
            <person name="McDonald L.A."/>
            <person name="Artiach P."/>
            <person name="Bowman C."/>
            <person name="Cotton M.D."/>
            <person name="Fujii C."/>
            <person name="Garland S.A."/>
            <person name="Hatch B."/>
            <person name="Horst K."/>
            <person name="Roberts K.M."/>
            <person name="Sandusky M."/>
            <person name="Weidman J.F."/>
            <person name="Smith H.O."/>
            <person name="Venter J.C."/>
        </authorList>
    </citation>
    <scope>NUCLEOTIDE SEQUENCE [LARGE SCALE GENOMIC DNA]</scope>
    <source>
        <strain>Nichols</strain>
    </source>
</reference>